<evidence type="ECO:0000250" key="1">
    <source>
        <dbReference type="UniProtKB" id="Q9BRQ8"/>
    </source>
</evidence>
<evidence type="ECO:0000255" key="2"/>
<evidence type="ECO:0000269" key="3">
    <source>
    </source>
</evidence>
<evidence type="ECO:0000269" key="4">
    <source>
    </source>
</evidence>
<evidence type="ECO:0000303" key="5">
    <source>
    </source>
</evidence>
<evidence type="ECO:0000305" key="6"/>
<evidence type="ECO:0000305" key="7">
    <source>
    </source>
</evidence>
<dbReference type="EC" id="1.-.-.-" evidence="7"/>
<dbReference type="EMBL" id="EU253974">
    <property type="protein sequence ID" value="ACC64452.1"/>
    <property type="molecule type" value="Genomic_DNA"/>
</dbReference>
<dbReference type="SMR" id="B2KWH9"/>
<dbReference type="GO" id="GO:0005737">
    <property type="term" value="C:cytoplasm"/>
    <property type="evidence" value="ECO:0007669"/>
    <property type="project" value="TreeGrafter"/>
</dbReference>
<dbReference type="GO" id="GO:0004174">
    <property type="term" value="F:electron-transferring-flavoprotein dehydrogenase activity"/>
    <property type="evidence" value="ECO:0007669"/>
    <property type="project" value="TreeGrafter"/>
</dbReference>
<dbReference type="GO" id="GO:0050660">
    <property type="term" value="F:flavin adenine dinucleotide binding"/>
    <property type="evidence" value="ECO:0007669"/>
    <property type="project" value="TreeGrafter"/>
</dbReference>
<dbReference type="Gene3D" id="3.50.50.100">
    <property type="match status" value="1"/>
</dbReference>
<dbReference type="InterPro" id="IPR036188">
    <property type="entry name" value="FAD/NAD-bd_sf"/>
</dbReference>
<dbReference type="InterPro" id="IPR023753">
    <property type="entry name" value="FAD/NAD-binding_dom"/>
</dbReference>
<dbReference type="PANTHER" id="PTHR43735">
    <property type="entry name" value="APOPTOSIS-INDUCING FACTOR 1"/>
    <property type="match status" value="1"/>
</dbReference>
<dbReference type="PANTHER" id="PTHR43735:SF24">
    <property type="entry name" value="NUCLEOTIDE-DISULPHIDE OXIDOREDUCTASE AMID-LIKE, PUTATIVE (AFU_ORTHOLOGUE AFUA_1G17180)-RELATED"/>
    <property type="match status" value="1"/>
</dbReference>
<dbReference type="Pfam" id="PF07992">
    <property type="entry name" value="Pyr_redox_2"/>
    <property type="match status" value="1"/>
</dbReference>
<dbReference type="PRINTS" id="PR00368">
    <property type="entry name" value="FADPNR"/>
</dbReference>
<dbReference type="PRINTS" id="PR00411">
    <property type="entry name" value="PNDRDTASEI"/>
</dbReference>
<dbReference type="SUPFAM" id="SSF51905">
    <property type="entry name" value="FAD/NAD(P)-binding domain"/>
    <property type="match status" value="1"/>
</dbReference>
<keyword id="KW-0274">FAD</keyword>
<keyword id="KW-0285">Flavoprotein</keyword>
<keyword id="KW-0560">Oxidoreductase</keyword>
<reference key="1">
    <citation type="journal article" date="2008" name="PLoS Pathog.">
        <title>Histoplasma requires SID1, a member of an iron-regulated siderophore gene cluster, for host colonization.</title>
        <authorList>
            <person name="Hwang L.H."/>
            <person name="Mayfield J.A."/>
            <person name="Rine J."/>
            <person name="Sil A."/>
        </authorList>
    </citation>
    <scope>NUCLEOTIDE SEQUENCE [GENOMIC DNA]</scope>
    <scope>FUNCTION</scope>
    <scope>INDUCTION</scope>
    <source>
        <strain>ATCC 26032 / G217B</strain>
    </source>
</reference>
<reference key="2">
    <citation type="journal article" date="2012" name="Eukaryot. Cell">
        <title>SRE1 regulates iron-dependent and -independent pathways in the fungal pathogen Histoplasma capsulatum.</title>
        <authorList>
            <person name="Hwang L.H."/>
            <person name="Seth E."/>
            <person name="Gilmore S.A."/>
            <person name="Sil A."/>
        </authorList>
    </citation>
    <scope>INDUCTION</scope>
</reference>
<organism>
    <name type="scientific">Ajellomyces capsulatus</name>
    <name type="common">Darling's disease fungus</name>
    <name type="synonym">Histoplasma capsulatum</name>
    <dbReference type="NCBI Taxonomy" id="5037"/>
    <lineage>
        <taxon>Eukaryota</taxon>
        <taxon>Fungi</taxon>
        <taxon>Dikarya</taxon>
        <taxon>Ascomycota</taxon>
        <taxon>Pezizomycotina</taxon>
        <taxon>Eurotiomycetes</taxon>
        <taxon>Eurotiomycetidae</taxon>
        <taxon>Onygenales</taxon>
        <taxon>Ajellomycetaceae</taxon>
        <taxon>Histoplasma</taxon>
    </lineage>
</organism>
<feature type="chain" id="PRO_0000444411" description="Oxidoreductase OXR1">
    <location>
        <begin position="1"/>
        <end position="463"/>
    </location>
</feature>
<feature type="binding site" evidence="2">
    <location>
        <begin position="59"/>
        <end position="63"/>
    </location>
    <ligand>
        <name>6-hydroxy-FAD</name>
        <dbReference type="ChEBI" id="CHEBI:60470"/>
    </ligand>
</feature>
<feature type="binding site" evidence="2">
    <location>
        <position position="154"/>
    </location>
    <ligand>
        <name>6-hydroxy-FAD</name>
        <dbReference type="ChEBI" id="CHEBI:60470"/>
    </ligand>
</feature>
<feature type="binding site" evidence="2">
    <location>
        <position position="366"/>
    </location>
    <ligand>
        <name>6-hydroxy-FAD</name>
        <dbReference type="ChEBI" id="CHEBI:60470"/>
    </ligand>
</feature>
<sequence>MLSLFYQRISTYIKLSASSLLSILPLYRPFQRRRLTMPSNEGSISSSSTTRPKDVLVVGGSYSGLAAALNLLDLCQGRSCRFAGALDPEISEPAEMRERVPVQITIVDERDGYFHLIGTPLAFASEEYALSAWRKFADIPALQTPAIKFIQGSVTRVDCERKISTIKEAGTNNEISQKYDYLVASSGLRRTWPSAPQSLNKDKYLEEVGEHIAKIKMANGGVVVIGGGAVGIEMASELKEMHPDLRVTLIHSRAKLLSSEPLPDEFRDRALELLHETGVETILGSRVIRTTQTELNGAATPSYTLSLTDGRTIKAGYVINAISKYSPTTAYLPSSVLDKEGYVKVNSALNFTDEVPNAKYHFAAGDLALWSGIKRAGRAMHHGHYVGMNIYQQLLNERFGTKPKFSEMAHAPPSMAVAVGKNTVAYGTEQGVVSGEEIAKIFFEDDLGFGICWRYLKLGEAPK</sequence>
<proteinExistence type="evidence at transcript level"/>
<protein>
    <recommendedName>
        <fullName evidence="5">Oxidoreductase OXR1</fullName>
        <ecNumber evidence="7">1.-.-.-</ecNumber>
    </recommendedName>
    <alternativeName>
        <fullName evidence="5">Siderophore biosynthesis cluster protein OXR1</fullName>
    </alternativeName>
</protein>
<gene>
    <name evidence="5" type="primary">OXR1</name>
</gene>
<name>OXR1_AJECA</name>
<comment type="function">
    <text evidence="3">Oxidoreductase; part of the gene cluster that mediates the biosynthesis of hydroxamate-containing siderophores that play a critical role in virulence via intracellular iron acquisition during macrophage infection (PubMed:18404210).</text>
</comment>
<comment type="cofactor">
    <cofactor evidence="1">
        <name>6-hydroxy-FAD</name>
        <dbReference type="ChEBI" id="CHEBI:60470"/>
    </cofactor>
    <text evidence="1">Binds 6-hydroxy-FAD non-covalently.</text>
</comment>
<comment type="pathway">
    <text evidence="7">Siderophore biosynthesis.</text>
</comment>
<comment type="induction">
    <text evidence="3 4">Expression is induced during iron deprivation and is regulated by the transcription factor SRE1 (PubMed:18404210, PubMed:22117028).</text>
</comment>
<comment type="similarity">
    <text evidence="6">Belongs to the FAD-dependent oxidoreductase family.</text>
</comment>
<accession>B2KWH9</accession>